<protein>
    <recommendedName>
        <fullName evidence="1">Small ribosomal subunit protein uS15</fullName>
    </recommendedName>
    <alternativeName>
        <fullName evidence="2">30S ribosomal protein S15</fullName>
    </alternativeName>
</protein>
<dbReference type="EMBL" id="CP000088">
    <property type="protein sequence ID" value="AAZ54821.1"/>
    <property type="molecule type" value="Genomic_DNA"/>
</dbReference>
<dbReference type="RefSeq" id="WP_011291230.1">
    <property type="nucleotide sequence ID" value="NC_007333.1"/>
</dbReference>
<dbReference type="SMR" id="Q47RU6"/>
<dbReference type="STRING" id="269800.Tfu_0783"/>
<dbReference type="KEGG" id="tfu:Tfu_0783"/>
<dbReference type="eggNOG" id="COG0184">
    <property type="taxonomic scope" value="Bacteria"/>
</dbReference>
<dbReference type="HOGENOM" id="CLU_148518_0_0_11"/>
<dbReference type="OrthoDB" id="9799262at2"/>
<dbReference type="GO" id="GO:0022627">
    <property type="term" value="C:cytosolic small ribosomal subunit"/>
    <property type="evidence" value="ECO:0007669"/>
    <property type="project" value="TreeGrafter"/>
</dbReference>
<dbReference type="GO" id="GO:0019843">
    <property type="term" value="F:rRNA binding"/>
    <property type="evidence" value="ECO:0007669"/>
    <property type="project" value="UniProtKB-UniRule"/>
</dbReference>
<dbReference type="GO" id="GO:0003735">
    <property type="term" value="F:structural constituent of ribosome"/>
    <property type="evidence" value="ECO:0007669"/>
    <property type="project" value="InterPro"/>
</dbReference>
<dbReference type="GO" id="GO:0006412">
    <property type="term" value="P:translation"/>
    <property type="evidence" value="ECO:0007669"/>
    <property type="project" value="UniProtKB-UniRule"/>
</dbReference>
<dbReference type="CDD" id="cd00353">
    <property type="entry name" value="Ribosomal_S15p_S13e"/>
    <property type="match status" value="1"/>
</dbReference>
<dbReference type="FunFam" id="1.10.287.10:FF:000002">
    <property type="entry name" value="30S ribosomal protein S15"/>
    <property type="match status" value="1"/>
</dbReference>
<dbReference type="Gene3D" id="6.10.250.3130">
    <property type="match status" value="1"/>
</dbReference>
<dbReference type="Gene3D" id="1.10.287.10">
    <property type="entry name" value="S15/NS1, RNA-binding"/>
    <property type="match status" value="1"/>
</dbReference>
<dbReference type="HAMAP" id="MF_01343_B">
    <property type="entry name" value="Ribosomal_uS15_B"/>
    <property type="match status" value="1"/>
</dbReference>
<dbReference type="InterPro" id="IPR000589">
    <property type="entry name" value="Ribosomal_uS15"/>
</dbReference>
<dbReference type="InterPro" id="IPR005290">
    <property type="entry name" value="Ribosomal_uS15_bac-type"/>
</dbReference>
<dbReference type="InterPro" id="IPR009068">
    <property type="entry name" value="uS15_NS1_RNA-bd_sf"/>
</dbReference>
<dbReference type="NCBIfam" id="TIGR00952">
    <property type="entry name" value="S15_bact"/>
    <property type="match status" value="1"/>
</dbReference>
<dbReference type="PANTHER" id="PTHR23321">
    <property type="entry name" value="RIBOSOMAL PROTEIN S15, BACTERIAL AND ORGANELLAR"/>
    <property type="match status" value="1"/>
</dbReference>
<dbReference type="PANTHER" id="PTHR23321:SF26">
    <property type="entry name" value="SMALL RIBOSOMAL SUBUNIT PROTEIN US15M"/>
    <property type="match status" value="1"/>
</dbReference>
<dbReference type="Pfam" id="PF00312">
    <property type="entry name" value="Ribosomal_S15"/>
    <property type="match status" value="1"/>
</dbReference>
<dbReference type="SMART" id="SM01387">
    <property type="entry name" value="Ribosomal_S15"/>
    <property type="match status" value="1"/>
</dbReference>
<dbReference type="SUPFAM" id="SSF47060">
    <property type="entry name" value="S15/NS1 RNA-binding domain"/>
    <property type="match status" value="1"/>
</dbReference>
<dbReference type="PROSITE" id="PS00362">
    <property type="entry name" value="RIBOSOMAL_S15"/>
    <property type="match status" value="1"/>
</dbReference>
<accession>Q47RU6</accession>
<proteinExistence type="inferred from homology"/>
<organism>
    <name type="scientific">Thermobifida fusca (strain YX)</name>
    <dbReference type="NCBI Taxonomy" id="269800"/>
    <lineage>
        <taxon>Bacteria</taxon>
        <taxon>Bacillati</taxon>
        <taxon>Actinomycetota</taxon>
        <taxon>Actinomycetes</taxon>
        <taxon>Streptosporangiales</taxon>
        <taxon>Nocardiopsidaceae</taxon>
        <taxon>Thermobifida</taxon>
    </lineage>
</organism>
<keyword id="KW-0687">Ribonucleoprotein</keyword>
<keyword id="KW-0689">Ribosomal protein</keyword>
<keyword id="KW-0694">RNA-binding</keyword>
<keyword id="KW-0699">rRNA-binding</keyword>
<gene>
    <name evidence="1" type="primary">rpsO</name>
    <name type="ordered locus">Tfu_0783</name>
</gene>
<reference key="1">
    <citation type="journal article" date="2007" name="J. Bacteriol.">
        <title>Genome sequence and analysis of the soil cellulolytic actinomycete Thermobifida fusca YX.</title>
        <authorList>
            <person name="Lykidis A."/>
            <person name="Mavromatis K."/>
            <person name="Ivanova N."/>
            <person name="Anderson I."/>
            <person name="Land M."/>
            <person name="DiBartolo G."/>
            <person name="Martinez M."/>
            <person name="Lapidus A."/>
            <person name="Lucas S."/>
            <person name="Copeland A."/>
            <person name="Richardson P."/>
            <person name="Wilson D.B."/>
            <person name="Kyrpides N."/>
        </authorList>
    </citation>
    <scope>NUCLEOTIDE SEQUENCE [LARGE SCALE GENOMIC DNA]</scope>
    <source>
        <strain>YX</strain>
    </source>
</reference>
<name>RS15_THEFY</name>
<sequence>MPIDTATKQKIIAEYATKEGDTGSPEVQVALLTHRINQLTEHLKEHKHDHHSRRGLLLLVGRRRRLLQYVAKKDINRYRRLIERLGLRR</sequence>
<evidence type="ECO:0000255" key="1">
    <source>
        <dbReference type="HAMAP-Rule" id="MF_01343"/>
    </source>
</evidence>
<evidence type="ECO:0000305" key="2"/>
<comment type="function">
    <text evidence="1">One of the primary rRNA binding proteins, it binds directly to 16S rRNA where it helps nucleate assembly of the platform of the 30S subunit by binding and bridging several RNA helices of the 16S rRNA.</text>
</comment>
<comment type="function">
    <text evidence="1">Forms an intersubunit bridge (bridge B4) with the 23S rRNA of the 50S subunit in the ribosome.</text>
</comment>
<comment type="subunit">
    <text evidence="1">Part of the 30S ribosomal subunit. Forms a bridge to the 50S subunit in the 70S ribosome, contacting the 23S rRNA.</text>
</comment>
<comment type="similarity">
    <text evidence="1">Belongs to the universal ribosomal protein uS15 family.</text>
</comment>
<feature type="chain" id="PRO_0000115570" description="Small ribosomal subunit protein uS15">
    <location>
        <begin position="1"/>
        <end position="89"/>
    </location>
</feature>